<feature type="chain" id="PRO_0000082935" description="Methionyl-tRNA formyltransferase">
    <location>
        <begin position="1"/>
        <end position="323"/>
    </location>
</feature>
<feature type="binding site" evidence="1">
    <location>
        <begin position="118"/>
        <end position="121"/>
    </location>
    <ligand>
        <name>(6S)-5,6,7,8-tetrahydrofolate</name>
        <dbReference type="ChEBI" id="CHEBI:57453"/>
    </ligand>
</feature>
<sequence>MILNTLNSLKIVFAGTDKFSKDHLKILVTNTTHKILGVITKPDQPLGRGKQITSSLTKKLAKKLKIPVFQPTALNTSTFYNQIYNLNADIIIVVSYGKIIPQLILNIFPLGGINVHTSLLPRWRGPSPIQSALLNGDKLTGITIIKMNNNIDTGDIIYSSSCIINKSDTSVTLQNKLKILSCQGLIQVLKNFKSSYFPIRQSNLATYSNKINKEDAKLIWLKSAIQLERSIRAYNPWPICYFKINNQLSIKVWSANVIIHFNQHKYQIGEIILINKHGMQIKTSKNILNITTVQLPGKKIMHANNLCNSKNKWCIPGTKLTNT</sequence>
<accession>P59557</accession>
<dbReference type="EC" id="2.1.2.9" evidence="1"/>
<dbReference type="EMBL" id="AE016826">
    <property type="protein sequence ID" value="AAO27146.1"/>
    <property type="molecule type" value="Genomic_DNA"/>
</dbReference>
<dbReference type="RefSeq" id="WP_011091547.1">
    <property type="nucleotide sequence ID" value="NC_004545.1"/>
</dbReference>
<dbReference type="SMR" id="P59557"/>
<dbReference type="STRING" id="224915.bbp_440"/>
<dbReference type="KEGG" id="bab:bbp_440"/>
<dbReference type="eggNOG" id="COG0223">
    <property type="taxonomic scope" value="Bacteria"/>
</dbReference>
<dbReference type="HOGENOM" id="CLU_033347_1_2_6"/>
<dbReference type="OrthoDB" id="9802815at2"/>
<dbReference type="Proteomes" id="UP000000601">
    <property type="component" value="Chromosome"/>
</dbReference>
<dbReference type="GO" id="GO:0005829">
    <property type="term" value="C:cytosol"/>
    <property type="evidence" value="ECO:0007669"/>
    <property type="project" value="TreeGrafter"/>
</dbReference>
<dbReference type="GO" id="GO:0004479">
    <property type="term" value="F:methionyl-tRNA formyltransferase activity"/>
    <property type="evidence" value="ECO:0007669"/>
    <property type="project" value="UniProtKB-UniRule"/>
</dbReference>
<dbReference type="CDD" id="cd08646">
    <property type="entry name" value="FMT_core_Met-tRNA-FMT_N"/>
    <property type="match status" value="1"/>
</dbReference>
<dbReference type="CDD" id="cd08704">
    <property type="entry name" value="Met_tRNA_FMT_C"/>
    <property type="match status" value="1"/>
</dbReference>
<dbReference type="Gene3D" id="3.10.25.10">
    <property type="entry name" value="Formyl transferase, C-terminal domain"/>
    <property type="match status" value="1"/>
</dbReference>
<dbReference type="Gene3D" id="3.40.50.170">
    <property type="entry name" value="Formyl transferase, N-terminal domain"/>
    <property type="match status" value="1"/>
</dbReference>
<dbReference type="HAMAP" id="MF_00182">
    <property type="entry name" value="Formyl_trans"/>
    <property type="match status" value="1"/>
</dbReference>
<dbReference type="InterPro" id="IPR005794">
    <property type="entry name" value="Fmt"/>
</dbReference>
<dbReference type="InterPro" id="IPR005793">
    <property type="entry name" value="Formyl_trans_C"/>
</dbReference>
<dbReference type="InterPro" id="IPR037022">
    <property type="entry name" value="Formyl_trans_C_sf"/>
</dbReference>
<dbReference type="InterPro" id="IPR002376">
    <property type="entry name" value="Formyl_transf_N"/>
</dbReference>
<dbReference type="InterPro" id="IPR036477">
    <property type="entry name" value="Formyl_transf_N_sf"/>
</dbReference>
<dbReference type="InterPro" id="IPR011034">
    <property type="entry name" value="Formyl_transferase-like_C_sf"/>
</dbReference>
<dbReference type="InterPro" id="IPR044135">
    <property type="entry name" value="Met-tRNA-FMT_C"/>
</dbReference>
<dbReference type="InterPro" id="IPR041711">
    <property type="entry name" value="Met-tRNA-FMT_N"/>
</dbReference>
<dbReference type="NCBIfam" id="TIGR00460">
    <property type="entry name" value="fmt"/>
    <property type="match status" value="1"/>
</dbReference>
<dbReference type="PANTHER" id="PTHR11138">
    <property type="entry name" value="METHIONYL-TRNA FORMYLTRANSFERASE"/>
    <property type="match status" value="1"/>
</dbReference>
<dbReference type="PANTHER" id="PTHR11138:SF5">
    <property type="entry name" value="METHIONYL-TRNA FORMYLTRANSFERASE, MITOCHONDRIAL"/>
    <property type="match status" value="1"/>
</dbReference>
<dbReference type="Pfam" id="PF02911">
    <property type="entry name" value="Formyl_trans_C"/>
    <property type="match status" value="1"/>
</dbReference>
<dbReference type="Pfam" id="PF00551">
    <property type="entry name" value="Formyl_trans_N"/>
    <property type="match status" value="1"/>
</dbReference>
<dbReference type="SUPFAM" id="SSF50486">
    <property type="entry name" value="FMT C-terminal domain-like"/>
    <property type="match status" value="1"/>
</dbReference>
<dbReference type="SUPFAM" id="SSF53328">
    <property type="entry name" value="Formyltransferase"/>
    <property type="match status" value="1"/>
</dbReference>
<reference key="1">
    <citation type="journal article" date="2003" name="Proc. Natl. Acad. Sci. U.S.A.">
        <title>Reductive genome evolution in Buchnera aphidicola.</title>
        <authorList>
            <person name="van Ham R.C.H.J."/>
            <person name="Kamerbeek J."/>
            <person name="Palacios C."/>
            <person name="Rausell C."/>
            <person name="Abascal F."/>
            <person name="Bastolla U."/>
            <person name="Fernandez J.M."/>
            <person name="Jimenez L."/>
            <person name="Postigo M."/>
            <person name="Silva F.J."/>
            <person name="Tamames J."/>
            <person name="Viguera E."/>
            <person name="Latorre A."/>
            <person name="Valencia A."/>
            <person name="Moran F."/>
            <person name="Moya A."/>
        </authorList>
    </citation>
    <scope>NUCLEOTIDE SEQUENCE [LARGE SCALE GENOMIC DNA]</scope>
    <source>
        <strain>Bp</strain>
    </source>
</reference>
<comment type="function">
    <text evidence="1">Attaches a formyl group to the free amino group of methionyl-tRNA(fMet). The formyl group appears to play a dual role in the initiator identity of N-formylmethionyl-tRNA by promoting its recognition by IF2 and preventing the misappropriation of this tRNA by the elongation apparatus.</text>
</comment>
<comment type="catalytic activity">
    <reaction evidence="1">
        <text>L-methionyl-tRNA(fMet) + (6R)-10-formyltetrahydrofolate = N-formyl-L-methionyl-tRNA(fMet) + (6S)-5,6,7,8-tetrahydrofolate + H(+)</text>
        <dbReference type="Rhea" id="RHEA:24380"/>
        <dbReference type="Rhea" id="RHEA-COMP:9952"/>
        <dbReference type="Rhea" id="RHEA-COMP:9953"/>
        <dbReference type="ChEBI" id="CHEBI:15378"/>
        <dbReference type="ChEBI" id="CHEBI:57453"/>
        <dbReference type="ChEBI" id="CHEBI:78530"/>
        <dbReference type="ChEBI" id="CHEBI:78844"/>
        <dbReference type="ChEBI" id="CHEBI:195366"/>
        <dbReference type="EC" id="2.1.2.9"/>
    </reaction>
</comment>
<comment type="similarity">
    <text evidence="1">Belongs to the Fmt family.</text>
</comment>
<proteinExistence type="inferred from homology"/>
<name>FMT_BUCBP</name>
<organism>
    <name type="scientific">Buchnera aphidicola subsp. Baizongia pistaciae (strain Bp)</name>
    <dbReference type="NCBI Taxonomy" id="224915"/>
    <lineage>
        <taxon>Bacteria</taxon>
        <taxon>Pseudomonadati</taxon>
        <taxon>Pseudomonadota</taxon>
        <taxon>Gammaproteobacteria</taxon>
        <taxon>Enterobacterales</taxon>
        <taxon>Erwiniaceae</taxon>
        <taxon>Buchnera</taxon>
    </lineage>
</organism>
<protein>
    <recommendedName>
        <fullName evidence="1">Methionyl-tRNA formyltransferase</fullName>
        <ecNumber evidence="1">2.1.2.9</ecNumber>
    </recommendedName>
</protein>
<keyword id="KW-0648">Protein biosynthesis</keyword>
<keyword id="KW-1185">Reference proteome</keyword>
<keyword id="KW-0808">Transferase</keyword>
<gene>
    <name evidence="1" type="primary">fmt</name>
    <name type="ordered locus">bbp_440</name>
</gene>
<evidence type="ECO:0000255" key="1">
    <source>
        <dbReference type="HAMAP-Rule" id="MF_00182"/>
    </source>
</evidence>